<name>YR604_MIMIV</name>
<organism>
    <name type="scientific">Acanthamoeba polyphaga mimivirus</name>
    <name type="common">APMV</name>
    <dbReference type="NCBI Taxonomy" id="212035"/>
    <lineage>
        <taxon>Viruses</taxon>
        <taxon>Varidnaviria</taxon>
        <taxon>Bamfordvirae</taxon>
        <taxon>Nucleocytoviricota</taxon>
        <taxon>Megaviricetes</taxon>
        <taxon>Imitervirales</taxon>
        <taxon>Mimiviridae</taxon>
        <taxon>Megamimivirinae</taxon>
        <taxon>Mimivirus</taxon>
        <taxon>Mimivirus bradfordmassiliense</taxon>
    </lineage>
</organism>
<proteinExistence type="predicted"/>
<reference key="1">
    <citation type="journal article" date="2004" name="Science">
        <title>The 1.2-megabase genome sequence of Mimivirus.</title>
        <authorList>
            <person name="Raoult D."/>
            <person name="Audic S."/>
            <person name="Robert C."/>
            <person name="Abergel C."/>
            <person name="Renesto P."/>
            <person name="Ogata H."/>
            <person name="La Scola B."/>
            <person name="Susan M."/>
            <person name="Claverie J.-M."/>
        </authorList>
    </citation>
    <scope>NUCLEOTIDE SEQUENCE [LARGE SCALE GENOMIC DNA]</scope>
    <source>
        <strain>Rowbotham-Bradford</strain>
    </source>
</reference>
<sequence length="387" mass="44756">MSSLPRNAVARNSKMHKKRDSGVKLSRNINTLDAVCKKHAVGNLIFRNCKMASYEGRVSFVDHEETRGNMRSGVIVVKATSIYSSEDIYDVVKVREDKIARDLKKRQEDYEKTKLEVERLKRSEELANKLANNDPKHDQLVEKLNENNTVEPNNESTEESVEQITEQTVEQTTEQTVEESVEQTTEKTTQQTAEESVEQSTEQTVEKSGDQSTEKTTQQTAEESVEQSTEQPIEESNKNTNQNNDNKKKKKEKNKYYRNFMKDIKSKFSLKLRPENNYFEVKAETTDMIIEHSVVYEIVMVPPTKETYLLVIGDLQMKSSYLRQIDPQYKMDAVLKEQTEFMERIKAKEQLKIHQSPNNKLEPEDMILDDGTSTLTEIEYLGLEEES</sequence>
<gene>
    <name type="ordered locus">MIMI_R604</name>
</gene>
<feature type="chain" id="PRO_0000243974" description="Uncharacterized protein R604">
    <location>
        <begin position="1"/>
        <end position="387"/>
    </location>
</feature>
<feature type="region of interest" description="Disordered" evidence="2">
    <location>
        <begin position="1"/>
        <end position="23"/>
    </location>
</feature>
<feature type="region of interest" description="Disordered" evidence="2">
    <location>
        <begin position="146"/>
        <end position="255"/>
    </location>
</feature>
<feature type="coiled-coil region" evidence="1">
    <location>
        <begin position="98"/>
        <end position="129"/>
    </location>
</feature>
<feature type="compositionally biased region" description="Low complexity" evidence="2">
    <location>
        <begin position="162"/>
        <end position="175"/>
    </location>
</feature>
<feature type="compositionally biased region" description="Low complexity" evidence="2">
    <location>
        <begin position="182"/>
        <end position="194"/>
    </location>
</feature>
<feature type="compositionally biased region" description="Basic and acidic residues" evidence="2">
    <location>
        <begin position="204"/>
        <end position="213"/>
    </location>
</feature>
<feature type="compositionally biased region" description="Polar residues" evidence="2">
    <location>
        <begin position="214"/>
        <end position="231"/>
    </location>
</feature>
<evidence type="ECO:0000255" key="1"/>
<evidence type="ECO:0000256" key="2">
    <source>
        <dbReference type="SAM" id="MobiDB-lite"/>
    </source>
</evidence>
<protein>
    <recommendedName>
        <fullName>Uncharacterized protein R604</fullName>
    </recommendedName>
</protein>
<accession>Q5UP72</accession>
<dbReference type="EMBL" id="AY653733">
    <property type="protein sequence ID" value="AAV50867.1"/>
    <property type="molecule type" value="Genomic_DNA"/>
</dbReference>
<dbReference type="SMR" id="Q5UP72"/>
<dbReference type="KEGG" id="vg:9925241"/>
<dbReference type="OrthoDB" id="18268at10239"/>
<dbReference type="Proteomes" id="UP000001134">
    <property type="component" value="Genome"/>
</dbReference>
<keyword id="KW-0175">Coiled coil</keyword>
<keyword id="KW-1185">Reference proteome</keyword>
<organismHost>
    <name type="scientific">Acanthamoeba polyphaga</name>
    <name type="common">Amoeba</name>
    <dbReference type="NCBI Taxonomy" id="5757"/>
</organismHost>